<comment type="catalytic activity">
    <reaction evidence="1">
        <text>(S)-2,3,4,5-tetrahydrodipicolinate + succinyl-CoA + H2O = (S)-2-succinylamino-6-oxoheptanedioate + CoA</text>
        <dbReference type="Rhea" id="RHEA:17325"/>
        <dbReference type="ChEBI" id="CHEBI:15377"/>
        <dbReference type="ChEBI" id="CHEBI:15685"/>
        <dbReference type="ChEBI" id="CHEBI:16845"/>
        <dbReference type="ChEBI" id="CHEBI:57287"/>
        <dbReference type="ChEBI" id="CHEBI:57292"/>
        <dbReference type="EC" id="2.3.1.117"/>
    </reaction>
</comment>
<comment type="pathway">
    <text evidence="1">Amino-acid biosynthesis; L-lysine biosynthesis via DAP pathway; LL-2,6-diaminopimelate from (S)-tetrahydrodipicolinate (succinylase route): step 1/3.</text>
</comment>
<comment type="subunit">
    <text evidence="1">Homotrimer.</text>
</comment>
<comment type="subcellular location">
    <subcellularLocation>
        <location evidence="1">Cytoplasm</location>
    </subcellularLocation>
</comment>
<comment type="similarity">
    <text evidence="1">Belongs to the transferase hexapeptide repeat family.</text>
</comment>
<protein>
    <recommendedName>
        <fullName evidence="1">2,3,4,5-tetrahydropyridine-2,6-dicarboxylate N-succinyltransferase</fullName>
        <ecNumber evidence="1">2.3.1.117</ecNumber>
    </recommendedName>
    <alternativeName>
        <fullName evidence="1">Tetrahydrodipicolinate N-succinyltransferase</fullName>
        <shortName evidence="1">THDP succinyltransferase</shortName>
        <shortName evidence="1">THP succinyltransferase</shortName>
        <shortName evidence="1">Tetrahydropicolinate succinylase</shortName>
    </alternativeName>
</protein>
<proteinExistence type="inferred from homology"/>
<keyword id="KW-0012">Acyltransferase</keyword>
<keyword id="KW-0028">Amino-acid biosynthesis</keyword>
<keyword id="KW-0963">Cytoplasm</keyword>
<keyword id="KW-0220">Diaminopimelate biosynthesis</keyword>
<keyword id="KW-0457">Lysine biosynthesis</keyword>
<keyword id="KW-1185">Reference proteome</keyword>
<keyword id="KW-0677">Repeat</keyword>
<keyword id="KW-0808">Transferase</keyword>
<dbReference type="EC" id="2.3.1.117" evidence="1"/>
<dbReference type="EMBL" id="CP000453">
    <property type="protein sequence ID" value="ABI57211.1"/>
    <property type="molecule type" value="Genomic_DNA"/>
</dbReference>
<dbReference type="RefSeq" id="WP_011629605.1">
    <property type="nucleotide sequence ID" value="NC_008340.1"/>
</dbReference>
<dbReference type="SMR" id="Q0A7H6"/>
<dbReference type="KEGG" id="aeh:Mlg_1867"/>
<dbReference type="eggNOG" id="COG2171">
    <property type="taxonomic scope" value="Bacteria"/>
</dbReference>
<dbReference type="HOGENOM" id="CLU_050859_0_1_6"/>
<dbReference type="OrthoDB" id="9775362at2"/>
<dbReference type="UniPathway" id="UPA00034">
    <property type="reaction ID" value="UER00019"/>
</dbReference>
<dbReference type="Proteomes" id="UP000001962">
    <property type="component" value="Chromosome"/>
</dbReference>
<dbReference type="GO" id="GO:0005737">
    <property type="term" value="C:cytoplasm"/>
    <property type="evidence" value="ECO:0007669"/>
    <property type="project" value="UniProtKB-SubCell"/>
</dbReference>
<dbReference type="GO" id="GO:0008666">
    <property type="term" value="F:2,3,4,5-tetrahydropyridine-2,6-dicarboxylate N-succinyltransferase activity"/>
    <property type="evidence" value="ECO:0007669"/>
    <property type="project" value="UniProtKB-UniRule"/>
</dbReference>
<dbReference type="GO" id="GO:0016779">
    <property type="term" value="F:nucleotidyltransferase activity"/>
    <property type="evidence" value="ECO:0007669"/>
    <property type="project" value="TreeGrafter"/>
</dbReference>
<dbReference type="GO" id="GO:0019877">
    <property type="term" value="P:diaminopimelate biosynthetic process"/>
    <property type="evidence" value="ECO:0007669"/>
    <property type="project" value="UniProtKB-UniRule"/>
</dbReference>
<dbReference type="GO" id="GO:0009089">
    <property type="term" value="P:lysine biosynthetic process via diaminopimelate"/>
    <property type="evidence" value="ECO:0007669"/>
    <property type="project" value="UniProtKB-UniRule"/>
</dbReference>
<dbReference type="CDD" id="cd03350">
    <property type="entry name" value="LbH_THP_succinylT"/>
    <property type="match status" value="1"/>
</dbReference>
<dbReference type="Gene3D" id="2.160.10.10">
    <property type="entry name" value="Hexapeptide repeat proteins"/>
    <property type="match status" value="1"/>
</dbReference>
<dbReference type="Gene3D" id="1.10.166.10">
    <property type="entry name" value="Tetrahydrodipicolinate-N-succinyltransferase, N-terminal domain"/>
    <property type="match status" value="1"/>
</dbReference>
<dbReference type="HAMAP" id="MF_00811">
    <property type="entry name" value="DapD"/>
    <property type="match status" value="1"/>
</dbReference>
<dbReference type="InterPro" id="IPR005664">
    <property type="entry name" value="DapD_Trfase_Hexpep_rpt_fam"/>
</dbReference>
<dbReference type="InterPro" id="IPR001451">
    <property type="entry name" value="Hexapep"/>
</dbReference>
<dbReference type="InterPro" id="IPR018357">
    <property type="entry name" value="Hexapep_transf_CS"/>
</dbReference>
<dbReference type="InterPro" id="IPR023180">
    <property type="entry name" value="THP_succinylTrfase_dom1"/>
</dbReference>
<dbReference type="InterPro" id="IPR037133">
    <property type="entry name" value="THP_succinylTrfase_N_sf"/>
</dbReference>
<dbReference type="InterPro" id="IPR011004">
    <property type="entry name" value="Trimer_LpxA-like_sf"/>
</dbReference>
<dbReference type="NCBIfam" id="TIGR00965">
    <property type="entry name" value="dapD"/>
    <property type="match status" value="1"/>
</dbReference>
<dbReference type="NCBIfam" id="NF008808">
    <property type="entry name" value="PRK11830.1"/>
    <property type="match status" value="1"/>
</dbReference>
<dbReference type="PANTHER" id="PTHR19136:SF52">
    <property type="entry name" value="2,3,4,5-TETRAHYDROPYRIDINE-2,6-DICARBOXYLATE N-SUCCINYLTRANSFERASE"/>
    <property type="match status" value="1"/>
</dbReference>
<dbReference type="PANTHER" id="PTHR19136">
    <property type="entry name" value="MOLYBDENUM COFACTOR GUANYLYLTRANSFERASE"/>
    <property type="match status" value="1"/>
</dbReference>
<dbReference type="Pfam" id="PF14602">
    <property type="entry name" value="Hexapep_2"/>
    <property type="match status" value="1"/>
</dbReference>
<dbReference type="Pfam" id="PF14805">
    <property type="entry name" value="THDPS_N_2"/>
    <property type="match status" value="1"/>
</dbReference>
<dbReference type="SUPFAM" id="SSF51161">
    <property type="entry name" value="Trimeric LpxA-like enzymes"/>
    <property type="match status" value="1"/>
</dbReference>
<dbReference type="PROSITE" id="PS00101">
    <property type="entry name" value="HEXAPEP_TRANSFERASES"/>
    <property type="match status" value="1"/>
</dbReference>
<gene>
    <name evidence="1" type="primary">dapD</name>
    <name type="ordered locus">Mlg_1867</name>
</gene>
<feature type="chain" id="PRO_1000047116" description="2,3,4,5-tetrahydropyridine-2,6-dicarboxylate N-succinyltransferase">
    <location>
        <begin position="1"/>
        <end position="272"/>
    </location>
</feature>
<feature type="binding site" evidence="1">
    <location>
        <position position="104"/>
    </location>
    <ligand>
        <name>substrate</name>
    </ligand>
</feature>
<feature type="binding site" evidence="1">
    <location>
        <position position="141"/>
    </location>
    <ligand>
        <name>substrate</name>
    </ligand>
</feature>
<accession>Q0A7H6</accession>
<reference key="1">
    <citation type="submission" date="2006-08" db="EMBL/GenBank/DDBJ databases">
        <title>Complete sequence of Alkalilimnicola ehrilichei MLHE-1.</title>
        <authorList>
            <person name="Copeland A."/>
            <person name="Lucas S."/>
            <person name="Lapidus A."/>
            <person name="Barry K."/>
            <person name="Detter J.C."/>
            <person name="Glavina del Rio T."/>
            <person name="Hammon N."/>
            <person name="Israni S."/>
            <person name="Dalin E."/>
            <person name="Tice H."/>
            <person name="Pitluck S."/>
            <person name="Sims D."/>
            <person name="Brettin T."/>
            <person name="Bruce D."/>
            <person name="Han C."/>
            <person name="Tapia R."/>
            <person name="Gilna P."/>
            <person name="Schmutz J."/>
            <person name="Larimer F."/>
            <person name="Land M."/>
            <person name="Hauser L."/>
            <person name="Kyrpides N."/>
            <person name="Mikhailova N."/>
            <person name="Oremland R.S."/>
            <person name="Hoeft S.E."/>
            <person name="Switzer-Blum J."/>
            <person name="Kulp T."/>
            <person name="King G."/>
            <person name="Tabita R."/>
            <person name="Witte B."/>
            <person name="Santini J.M."/>
            <person name="Basu P."/>
            <person name="Hollibaugh J.T."/>
            <person name="Xie G."/>
            <person name="Stolz J.F."/>
            <person name="Richardson P."/>
        </authorList>
    </citation>
    <scope>NUCLEOTIDE SEQUENCE [LARGE SCALE GENOMIC DNA]</scope>
    <source>
        <strain>ATCC BAA-1101 / DSM 17681 / MLHE-1</strain>
    </source>
</reference>
<organism>
    <name type="scientific">Alkalilimnicola ehrlichii (strain ATCC BAA-1101 / DSM 17681 / MLHE-1)</name>
    <dbReference type="NCBI Taxonomy" id="187272"/>
    <lineage>
        <taxon>Bacteria</taxon>
        <taxon>Pseudomonadati</taxon>
        <taxon>Pseudomonadota</taxon>
        <taxon>Gammaproteobacteria</taxon>
        <taxon>Chromatiales</taxon>
        <taxon>Ectothiorhodospiraceae</taxon>
        <taxon>Alkalilimnicola</taxon>
    </lineage>
</organism>
<sequence>MQDLKQTIETAFENRGELSPASAPAAVREAVEQALAMLDRGEARVAEKRDGDWVVNEWLKKAVLLSFRLNDNEIIRGGATNFFDKVPLKFADTNSEQMRASGVRVVPPAMARRGAYIGPGAVLMPSYVNIGAYVDEGTMVDTWATVGSCAQIGKNVHLSGGVGIGGVLEPLQAAPTIIEDNCFIGARSEVVEGVIVEEGAVISMGVYIGQSTKIYNRETGEVTYGRVPKGAVVVPGSLPAKDGSHSLYCAVIIKQVDAQTRSKVGINELLRP</sequence>
<name>DAPD_ALKEH</name>
<evidence type="ECO:0000255" key="1">
    <source>
        <dbReference type="HAMAP-Rule" id="MF_00811"/>
    </source>
</evidence>